<feature type="chain" id="PRO_1000085636" description="Uracil phosphoribosyltransferase">
    <location>
        <begin position="1"/>
        <end position="208"/>
    </location>
</feature>
<feature type="binding site" evidence="1">
    <location>
        <position position="78"/>
    </location>
    <ligand>
        <name>5-phospho-alpha-D-ribose 1-diphosphate</name>
        <dbReference type="ChEBI" id="CHEBI:58017"/>
    </ligand>
</feature>
<feature type="binding site" evidence="1">
    <location>
        <position position="103"/>
    </location>
    <ligand>
        <name>5-phospho-alpha-D-ribose 1-diphosphate</name>
        <dbReference type="ChEBI" id="CHEBI:58017"/>
    </ligand>
</feature>
<feature type="binding site" evidence="1">
    <location>
        <begin position="130"/>
        <end position="138"/>
    </location>
    <ligand>
        <name>5-phospho-alpha-D-ribose 1-diphosphate</name>
        <dbReference type="ChEBI" id="CHEBI:58017"/>
    </ligand>
</feature>
<feature type="binding site" evidence="1">
    <location>
        <position position="193"/>
    </location>
    <ligand>
        <name>uracil</name>
        <dbReference type="ChEBI" id="CHEBI:17568"/>
    </ligand>
</feature>
<feature type="binding site" evidence="1">
    <location>
        <begin position="198"/>
        <end position="200"/>
    </location>
    <ligand>
        <name>uracil</name>
        <dbReference type="ChEBI" id="CHEBI:17568"/>
    </ligand>
</feature>
<feature type="binding site" evidence="1">
    <location>
        <position position="199"/>
    </location>
    <ligand>
        <name>5-phospho-alpha-D-ribose 1-diphosphate</name>
        <dbReference type="ChEBI" id="CHEBI:58017"/>
    </ligand>
</feature>
<sequence>MKIVEVKHPLVKHKLGLMRENDISTKRFRELASEVGSLLTYEATADLETEKVTIEGWNGPVEIDQIKGKKITVVPILRAGLGMMEGVLENVPSARISVVGMYRNEETLEPVPYFQKLVSNIDERMALIVDPMLATGGSVIATIDLLKKAGCSSIKVLVLVAAPEGIAALEKAHPDVELYTASIDQGLNEHGYIIPGLGDAGDKIFGTK</sequence>
<keyword id="KW-0021">Allosteric enzyme</keyword>
<keyword id="KW-0328">Glycosyltransferase</keyword>
<keyword id="KW-0342">GTP-binding</keyword>
<keyword id="KW-0460">Magnesium</keyword>
<keyword id="KW-0547">Nucleotide-binding</keyword>
<keyword id="KW-0808">Transferase</keyword>
<name>UPP_SALPB</name>
<evidence type="ECO:0000255" key="1">
    <source>
        <dbReference type="HAMAP-Rule" id="MF_01218"/>
    </source>
</evidence>
<dbReference type="EC" id="2.4.2.9" evidence="1"/>
<dbReference type="EMBL" id="CP000886">
    <property type="protein sequence ID" value="ABX65880.1"/>
    <property type="molecule type" value="Genomic_DNA"/>
</dbReference>
<dbReference type="RefSeq" id="WP_000706208.1">
    <property type="nucleotide sequence ID" value="NC_010102.1"/>
</dbReference>
<dbReference type="SMR" id="A9N2Y1"/>
<dbReference type="KEGG" id="spq:SPAB_00447"/>
<dbReference type="PATRIC" id="fig|1016998.12.peg.422"/>
<dbReference type="HOGENOM" id="CLU_067096_2_2_6"/>
<dbReference type="BioCyc" id="SENT1016998:SPAB_RS01815-MONOMER"/>
<dbReference type="UniPathway" id="UPA00574">
    <property type="reaction ID" value="UER00636"/>
</dbReference>
<dbReference type="Proteomes" id="UP000008556">
    <property type="component" value="Chromosome"/>
</dbReference>
<dbReference type="GO" id="GO:0005525">
    <property type="term" value="F:GTP binding"/>
    <property type="evidence" value="ECO:0007669"/>
    <property type="project" value="UniProtKB-KW"/>
</dbReference>
<dbReference type="GO" id="GO:0000287">
    <property type="term" value="F:magnesium ion binding"/>
    <property type="evidence" value="ECO:0007669"/>
    <property type="project" value="UniProtKB-UniRule"/>
</dbReference>
<dbReference type="GO" id="GO:0004845">
    <property type="term" value="F:uracil phosphoribosyltransferase activity"/>
    <property type="evidence" value="ECO:0007669"/>
    <property type="project" value="UniProtKB-UniRule"/>
</dbReference>
<dbReference type="GO" id="GO:0044206">
    <property type="term" value="P:UMP salvage"/>
    <property type="evidence" value="ECO:0007669"/>
    <property type="project" value="UniProtKB-UniRule"/>
</dbReference>
<dbReference type="GO" id="GO:0006223">
    <property type="term" value="P:uracil salvage"/>
    <property type="evidence" value="ECO:0007669"/>
    <property type="project" value="InterPro"/>
</dbReference>
<dbReference type="CDD" id="cd06223">
    <property type="entry name" value="PRTases_typeI"/>
    <property type="match status" value="1"/>
</dbReference>
<dbReference type="FunFam" id="3.40.50.2020:FF:000003">
    <property type="entry name" value="Uracil phosphoribosyltransferase"/>
    <property type="match status" value="1"/>
</dbReference>
<dbReference type="Gene3D" id="3.40.50.2020">
    <property type="match status" value="1"/>
</dbReference>
<dbReference type="HAMAP" id="MF_01218_B">
    <property type="entry name" value="Upp_B"/>
    <property type="match status" value="1"/>
</dbReference>
<dbReference type="InterPro" id="IPR000836">
    <property type="entry name" value="PRibTrfase_dom"/>
</dbReference>
<dbReference type="InterPro" id="IPR029057">
    <property type="entry name" value="PRTase-like"/>
</dbReference>
<dbReference type="InterPro" id="IPR034332">
    <property type="entry name" value="Upp_B"/>
</dbReference>
<dbReference type="InterPro" id="IPR050054">
    <property type="entry name" value="UPRTase/APRTase"/>
</dbReference>
<dbReference type="InterPro" id="IPR005765">
    <property type="entry name" value="Ura_phspho_trans"/>
</dbReference>
<dbReference type="NCBIfam" id="NF001097">
    <property type="entry name" value="PRK00129.1"/>
    <property type="match status" value="1"/>
</dbReference>
<dbReference type="NCBIfam" id="TIGR01091">
    <property type="entry name" value="upp"/>
    <property type="match status" value="1"/>
</dbReference>
<dbReference type="PANTHER" id="PTHR32315">
    <property type="entry name" value="ADENINE PHOSPHORIBOSYLTRANSFERASE"/>
    <property type="match status" value="1"/>
</dbReference>
<dbReference type="PANTHER" id="PTHR32315:SF4">
    <property type="entry name" value="URACIL PHOSPHORIBOSYLTRANSFERASE, CHLOROPLASTIC"/>
    <property type="match status" value="1"/>
</dbReference>
<dbReference type="Pfam" id="PF14681">
    <property type="entry name" value="UPRTase"/>
    <property type="match status" value="1"/>
</dbReference>
<dbReference type="SUPFAM" id="SSF53271">
    <property type="entry name" value="PRTase-like"/>
    <property type="match status" value="1"/>
</dbReference>
<organism>
    <name type="scientific">Salmonella paratyphi B (strain ATCC BAA-1250 / SPB7)</name>
    <dbReference type="NCBI Taxonomy" id="1016998"/>
    <lineage>
        <taxon>Bacteria</taxon>
        <taxon>Pseudomonadati</taxon>
        <taxon>Pseudomonadota</taxon>
        <taxon>Gammaproteobacteria</taxon>
        <taxon>Enterobacterales</taxon>
        <taxon>Enterobacteriaceae</taxon>
        <taxon>Salmonella</taxon>
    </lineage>
</organism>
<reference key="1">
    <citation type="submission" date="2007-11" db="EMBL/GenBank/DDBJ databases">
        <authorList>
            <consortium name="The Salmonella enterica serovar Paratyphi B Genome Sequencing Project"/>
            <person name="McClelland M."/>
            <person name="Sanderson E.K."/>
            <person name="Porwollik S."/>
            <person name="Spieth J."/>
            <person name="Clifton W.S."/>
            <person name="Fulton R."/>
            <person name="Cordes M."/>
            <person name="Wollam A."/>
            <person name="Shah N."/>
            <person name="Pepin K."/>
            <person name="Bhonagiri V."/>
            <person name="Nash W."/>
            <person name="Johnson M."/>
            <person name="Thiruvilangam P."/>
            <person name="Wilson R."/>
        </authorList>
    </citation>
    <scope>NUCLEOTIDE SEQUENCE [LARGE SCALE GENOMIC DNA]</scope>
    <source>
        <strain>ATCC BAA-1250 / SPB7</strain>
    </source>
</reference>
<protein>
    <recommendedName>
        <fullName evidence="1">Uracil phosphoribosyltransferase</fullName>
        <ecNumber evidence="1">2.4.2.9</ecNumber>
    </recommendedName>
    <alternativeName>
        <fullName evidence="1">UMP pyrophosphorylase</fullName>
    </alternativeName>
    <alternativeName>
        <fullName evidence="1">UPRTase</fullName>
    </alternativeName>
</protein>
<accession>A9N2Y1</accession>
<proteinExistence type="inferred from homology"/>
<gene>
    <name evidence="1" type="primary">upp</name>
    <name type="ordered locus">SPAB_00447</name>
</gene>
<comment type="function">
    <text evidence="1">Catalyzes the conversion of uracil and 5-phospho-alpha-D-ribose 1-diphosphate (PRPP) to UMP and diphosphate.</text>
</comment>
<comment type="catalytic activity">
    <reaction evidence="1">
        <text>UMP + diphosphate = 5-phospho-alpha-D-ribose 1-diphosphate + uracil</text>
        <dbReference type="Rhea" id="RHEA:13017"/>
        <dbReference type="ChEBI" id="CHEBI:17568"/>
        <dbReference type="ChEBI" id="CHEBI:33019"/>
        <dbReference type="ChEBI" id="CHEBI:57865"/>
        <dbReference type="ChEBI" id="CHEBI:58017"/>
        <dbReference type="EC" id="2.4.2.9"/>
    </reaction>
</comment>
<comment type="cofactor">
    <cofactor evidence="1">
        <name>Mg(2+)</name>
        <dbReference type="ChEBI" id="CHEBI:18420"/>
    </cofactor>
    <text evidence="1">Binds 1 Mg(2+) ion per subunit. The magnesium is bound as Mg-PRPP.</text>
</comment>
<comment type="activity regulation">
    <text evidence="1">Allosterically activated by GTP.</text>
</comment>
<comment type="pathway">
    <text evidence="1">Pyrimidine metabolism; UMP biosynthesis via salvage pathway; UMP from uracil: step 1/1.</text>
</comment>
<comment type="similarity">
    <text evidence="1">Belongs to the UPRTase family.</text>
</comment>